<reference key="1">
    <citation type="journal article" date="2002" name="Plant Physiol.">
        <title>Leaf senescence and starvation-induced chlorosis are accelerated by the disruption of an Arabidopsis autophagy gene.</title>
        <authorList>
            <person name="Hanaoka H."/>
            <person name="Noda T."/>
            <person name="Shirano Y."/>
            <person name="Kato T."/>
            <person name="Hayashi H."/>
            <person name="Shibata D."/>
            <person name="Tabata S."/>
            <person name="Ohsumi Y."/>
        </authorList>
    </citation>
    <scope>NUCLEOTIDE SEQUENCE [MRNA]</scope>
    <scope>NOMENCLATURE</scope>
    <scope>GENE FAMILY</scope>
</reference>
<reference key="2">
    <citation type="journal article" date="2000" name="DNA Res.">
        <title>Structural analysis of Arabidopsis thaliana chromosome 3. I. Sequence features of the regions of 4,504,864 bp covered by sixty P1 and TAC clones.</title>
        <authorList>
            <person name="Sato S."/>
            <person name="Nakamura Y."/>
            <person name="Kaneko T."/>
            <person name="Katoh T."/>
            <person name="Asamizu E."/>
            <person name="Tabata S."/>
        </authorList>
    </citation>
    <scope>NUCLEOTIDE SEQUENCE [LARGE SCALE GENOMIC DNA]</scope>
    <source>
        <strain>cv. Columbia</strain>
    </source>
</reference>
<reference key="3">
    <citation type="journal article" date="2017" name="Plant J.">
        <title>Araport11: a complete reannotation of the Arabidopsis thaliana reference genome.</title>
        <authorList>
            <person name="Cheng C.Y."/>
            <person name="Krishnakumar V."/>
            <person name="Chan A.P."/>
            <person name="Thibaud-Nissen F."/>
            <person name="Schobel S."/>
            <person name="Town C.D."/>
        </authorList>
    </citation>
    <scope>GENOME REANNOTATION</scope>
    <source>
        <strain>cv. Columbia</strain>
    </source>
</reference>
<reference key="4">
    <citation type="submission" date="2006-02" db="EMBL/GenBank/DDBJ databases">
        <title>Arabidopsis ORF clones.</title>
        <authorList>
            <person name="Shinn P."/>
            <person name="Chen H."/>
            <person name="Kim C.J."/>
            <person name="Ecker J.R."/>
        </authorList>
    </citation>
    <scope>NUCLEOTIDE SEQUENCE [LARGE SCALE MRNA]</scope>
    <source>
        <strain>cv. Columbia</strain>
    </source>
</reference>
<reference key="5">
    <citation type="journal article" date="2002" name="Science">
        <title>Functional annotation of a full-length Arabidopsis cDNA collection.</title>
        <authorList>
            <person name="Seki M."/>
            <person name="Narusaka M."/>
            <person name="Kamiya A."/>
            <person name="Ishida J."/>
            <person name="Satou M."/>
            <person name="Sakurai T."/>
            <person name="Nakajima M."/>
            <person name="Enju A."/>
            <person name="Akiyama K."/>
            <person name="Oono Y."/>
            <person name="Muramatsu M."/>
            <person name="Hayashizaki Y."/>
            <person name="Kawai J."/>
            <person name="Carninci P."/>
            <person name="Itoh M."/>
            <person name="Ishii Y."/>
            <person name="Arakawa T."/>
            <person name="Shibata K."/>
            <person name="Shinagawa A."/>
            <person name="Shinozaki K."/>
        </authorList>
    </citation>
    <scope>NUCLEOTIDE SEQUENCE [LARGE SCALE MRNA]</scope>
    <source>
        <strain>cv. Columbia</strain>
    </source>
</reference>
<reference key="6">
    <citation type="journal article" date="2005" name="Autophagy">
        <title>The crystal structure of plant ATG12 and its biological implication in autophagy.</title>
        <authorList>
            <person name="Suzuki N.N."/>
            <person name="Yoshimoto K."/>
            <person name="Fujioka Y."/>
            <person name="Ohsumi Y."/>
            <person name="Inagaki F."/>
        </authorList>
    </citation>
    <scope>X-RAY CRYSTALLOGRAPHY (1.8 ANGSTROMS) OF 1-94</scope>
</reference>
<reference key="7">
    <citation type="journal article" date="2005" name="Plant Physiol.">
        <title>Autophagic nutrient recycling in Arabidopsis directed by the ATG8 and ATG12 conjugation pathways.</title>
        <authorList>
            <person name="Thompson A.R."/>
            <person name="Doelling J.H."/>
            <person name="Suttangkakul A."/>
            <person name="Vierstra R.D."/>
        </authorList>
    </citation>
    <scope>FUNCTION</scope>
    <scope>TISSUE SPECIFICITY</scope>
</reference>
<keyword id="KW-0002">3D-structure</keyword>
<keyword id="KW-0007">Acetylation</keyword>
<keyword id="KW-0072">Autophagy</keyword>
<keyword id="KW-0963">Cytoplasm</keyword>
<keyword id="KW-1017">Isopeptide bond</keyword>
<keyword id="KW-0653">Protein transport</keyword>
<keyword id="KW-1185">Reference proteome</keyword>
<keyword id="KW-0813">Transport</keyword>
<keyword id="KW-0833">Ubl conjugation pathway</keyword>
<organism>
    <name type="scientific">Arabidopsis thaliana</name>
    <name type="common">Mouse-ear cress</name>
    <dbReference type="NCBI Taxonomy" id="3702"/>
    <lineage>
        <taxon>Eukaryota</taxon>
        <taxon>Viridiplantae</taxon>
        <taxon>Streptophyta</taxon>
        <taxon>Embryophyta</taxon>
        <taxon>Tracheophyta</taxon>
        <taxon>Spermatophyta</taxon>
        <taxon>Magnoliopsida</taxon>
        <taxon>eudicotyledons</taxon>
        <taxon>Gunneridae</taxon>
        <taxon>Pentapetalae</taxon>
        <taxon>rosids</taxon>
        <taxon>malvids</taxon>
        <taxon>Brassicales</taxon>
        <taxon>Brassicaceae</taxon>
        <taxon>Camelineae</taxon>
        <taxon>Arabidopsis</taxon>
    </lineage>
</organism>
<protein>
    <recommendedName>
        <fullName>Ubiquitin-like protein ATG12B</fullName>
    </recommendedName>
    <alternativeName>
        <fullName>Autophagy-related protein 12b</fullName>
        <shortName>APG12-like protein b</shortName>
        <shortName>AtAPG12b</shortName>
    </alternativeName>
</protein>
<name>AT12B_ARATH</name>
<sequence>MATESPNSVQKIVVHLRATGGAPILKQSKFKVSGSDKFANVIDFLRRQLHSDSLFVYVNSAFSPNPDESVIDLYNNFGFDGKLVVNYACSMAWG</sequence>
<dbReference type="EMBL" id="AB073185">
    <property type="protein sequence ID" value="BAB88397.1"/>
    <property type="molecule type" value="mRNA"/>
</dbReference>
<dbReference type="EMBL" id="AB019229">
    <property type="protein sequence ID" value="BAB02327.1"/>
    <property type="molecule type" value="Genomic_DNA"/>
</dbReference>
<dbReference type="EMBL" id="CP002686">
    <property type="protein sequence ID" value="AEE75446.1"/>
    <property type="molecule type" value="Genomic_DNA"/>
</dbReference>
<dbReference type="EMBL" id="BT024653">
    <property type="protein sequence ID" value="ABD57478.1"/>
    <property type="molecule type" value="mRNA"/>
</dbReference>
<dbReference type="EMBL" id="AK118997">
    <property type="protein sequence ID" value="BAC43573.1"/>
    <property type="molecule type" value="mRNA"/>
</dbReference>
<dbReference type="RefSeq" id="NP_188013.2">
    <property type="nucleotide sequence ID" value="NM_112251.4"/>
</dbReference>
<dbReference type="PDB" id="1WZ3">
    <property type="method" value="X-ray"/>
    <property type="resolution" value="1.80 A"/>
    <property type="chains" value="A/B=1-94"/>
</dbReference>
<dbReference type="PDB" id="7EU4">
    <property type="method" value="X-ray"/>
    <property type="resolution" value="3.20 A"/>
    <property type="chains" value="A/B/C/D/E/F/G/H/I/J/K/L/M/N=1-94"/>
</dbReference>
<dbReference type="PDBsum" id="1WZ3"/>
<dbReference type="PDBsum" id="7EU4"/>
<dbReference type="SMR" id="Q9LVK3"/>
<dbReference type="BioGRID" id="5945">
    <property type="interactions" value="1"/>
</dbReference>
<dbReference type="FunCoup" id="Q9LVK3">
    <property type="interactions" value="3527"/>
</dbReference>
<dbReference type="IntAct" id="Q9LVK3">
    <property type="interactions" value="1"/>
</dbReference>
<dbReference type="MINT" id="Q9LVK3"/>
<dbReference type="STRING" id="3702.Q9LVK3"/>
<dbReference type="PaxDb" id="3702-AT3G13970.1"/>
<dbReference type="EnsemblPlants" id="AT3G13970.1">
    <property type="protein sequence ID" value="AT3G13970.1"/>
    <property type="gene ID" value="AT3G13970"/>
</dbReference>
<dbReference type="GeneID" id="820611"/>
<dbReference type="Gramene" id="AT3G13970.1">
    <property type="protein sequence ID" value="AT3G13970.1"/>
    <property type="gene ID" value="AT3G13970"/>
</dbReference>
<dbReference type="KEGG" id="ath:AT3G13970"/>
<dbReference type="Araport" id="AT3G13970"/>
<dbReference type="TAIR" id="AT3G13970">
    <property type="gene designation" value="APG12B"/>
</dbReference>
<dbReference type="eggNOG" id="KOG3439">
    <property type="taxonomic scope" value="Eukaryota"/>
</dbReference>
<dbReference type="HOGENOM" id="CLU_106795_3_1_1"/>
<dbReference type="InParanoid" id="Q9LVK3"/>
<dbReference type="OMA" id="EHIYLYI"/>
<dbReference type="OrthoDB" id="10003551at2759"/>
<dbReference type="PhylomeDB" id="Q9LVK3"/>
<dbReference type="EvolutionaryTrace" id="Q9LVK3"/>
<dbReference type="PRO" id="PR:Q9LVK3"/>
<dbReference type="Proteomes" id="UP000006548">
    <property type="component" value="Chromosome 3"/>
</dbReference>
<dbReference type="ExpressionAtlas" id="Q9LVK3">
    <property type="expression patterns" value="baseline and differential"/>
</dbReference>
<dbReference type="GO" id="GO:0005737">
    <property type="term" value="C:cytoplasm"/>
    <property type="evidence" value="ECO:0007669"/>
    <property type="project" value="UniProtKB-SubCell"/>
</dbReference>
<dbReference type="GO" id="GO:0000045">
    <property type="term" value="P:autophagosome assembly"/>
    <property type="evidence" value="ECO:0007669"/>
    <property type="project" value="InterPro"/>
</dbReference>
<dbReference type="GO" id="GO:0006914">
    <property type="term" value="P:autophagy"/>
    <property type="evidence" value="ECO:0000316"/>
    <property type="project" value="TAIR"/>
</dbReference>
<dbReference type="GO" id="GO:0015031">
    <property type="term" value="P:protein transport"/>
    <property type="evidence" value="ECO:0007669"/>
    <property type="project" value="UniProtKB-KW"/>
</dbReference>
<dbReference type="CDD" id="cd01612">
    <property type="entry name" value="Ubl_ATG12"/>
    <property type="match status" value="1"/>
</dbReference>
<dbReference type="FunFam" id="3.10.20.90:FF:000150">
    <property type="entry name" value="Ubiquitin-like protein ATG12"/>
    <property type="match status" value="1"/>
</dbReference>
<dbReference type="Gene3D" id="3.10.20.90">
    <property type="entry name" value="Phosphatidylinositol 3-kinase Catalytic Subunit, Chain A, domain 1"/>
    <property type="match status" value="1"/>
</dbReference>
<dbReference type="InterPro" id="IPR007242">
    <property type="entry name" value="Atg12"/>
</dbReference>
<dbReference type="InterPro" id="IPR029071">
    <property type="entry name" value="Ubiquitin-like_domsf"/>
</dbReference>
<dbReference type="PANTHER" id="PTHR13385">
    <property type="entry name" value="AUTOPHAGY PROTEIN 12"/>
    <property type="match status" value="1"/>
</dbReference>
<dbReference type="PANTHER" id="PTHR13385:SF7">
    <property type="entry name" value="UBIQUITIN-LIKE PROTEIN ATG12B"/>
    <property type="match status" value="1"/>
</dbReference>
<dbReference type="Pfam" id="PF04110">
    <property type="entry name" value="APG12"/>
    <property type="match status" value="1"/>
</dbReference>
<dbReference type="SUPFAM" id="SSF54236">
    <property type="entry name" value="Ubiquitin-like"/>
    <property type="match status" value="1"/>
</dbReference>
<accession>Q9LVK3</accession>
<feature type="initiator methionine" description="Removed" evidence="2">
    <location>
        <position position="1"/>
    </location>
</feature>
<feature type="chain" id="PRO_0000250543" description="Ubiquitin-like protein ATG12B">
    <location>
        <begin position="2"/>
        <end position="94"/>
    </location>
</feature>
<feature type="modified residue" description="N-acetylalanine" evidence="2">
    <location>
        <position position="2"/>
    </location>
</feature>
<feature type="cross-link" description="Glycyl lysine isopeptide (Gly-Lys) (interchain with K-128 in ATG5)" evidence="1">
    <location>
        <position position="94"/>
    </location>
</feature>
<feature type="strand" evidence="6">
    <location>
        <begin position="2"/>
        <end position="5"/>
    </location>
</feature>
<feature type="strand" evidence="6">
    <location>
        <begin position="7"/>
        <end position="9"/>
    </location>
</feature>
<feature type="strand" evidence="5">
    <location>
        <begin position="11"/>
        <end position="18"/>
    </location>
</feature>
<feature type="strand" evidence="5">
    <location>
        <begin position="29"/>
        <end position="33"/>
    </location>
</feature>
<feature type="helix" evidence="5">
    <location>
        <begin position="39"/>
        <end position="49"/>
    </location>
</feature>
<feature type="strand" evidence="5">
    <location>
        <begin position="55"/>
        <end position="62"/>
    </location>
</feature>
<feature type="helix" evidence="5">
    <location>
        <begin position="70"/>
        <end position="77"/>
    </location>
</feature>
<feature type="strand" evidence="5">
    <location>
        <begin position="82"/>
        <end position="89"/>
    </location>
</feature>
<proteinExistence type="evidence at protein level"/>
<comment type="function">
    <text evidence="3">Ubiquitin-like protein involved in cytoplasm to vacuole transport (Cvt) and autophagy vesicles formation. Conjugation with ATG5 through a ubiquitin-like conjugating system involving also ATG7 as an E1-like activating enzyme and ATG10 as an E2-like conjugating enzyme, is essential for its function. ATG12/ATG5 conjugate has an essential role in plant nutrient recycling.</text>
</comment>
<comment type="interaction">
    <interactant intactId="EBI-8276588">
        <id>Q9LVK3</id>
    </interactant>
    <interactant intactId="EBI-8276607">
        <id>Q0WWQ1</id>
        <label>ATG3</label>
    </interactant>
    <organismsDiffer>false</organismsDiffer>
    <experiments>2</experiments>
</comment>
<comment type="subcellular location">
    <subcellularLocation>
        <location evidence="1">Cytoplasm</location>
    </subcellularLocation>
</comment>
<comment type="tissue specificity">
    <text evidence="3">Ubiquitous.</text>
</comment>
<comment type="similarity">
    <text evidence="4">Belongs to the ATG12 family.</text>
</comment>
<gene>
    <name type="primary">ATG12B</name>
    <name type="synonym">APG12</name>
    <name type="synonym">APG12B</name>
    <name type="ordered locus">At3g13970</name>
    <name type="ORF">MDC16.9</name>
</gene>
<evidence type="ECO:0000250" key="1"/>
<evidence type="ECO:0000250" key="2">
    <source>
        <dbReference type="UniProtKB" id="Q8S924"/>
    </source>
</evidence>
<evidence type="ECO:0000269" key="3">
    <source>
    </source>
</evidence>
<evidence type="ECO:0000305" key="4"/>
<evidence type="ECO:0007829" key="5">
    <source>
        <dbReference type="PDB" id="1WZ3"/>
    </source>
</evidence>
<evidence type="ECO:0007829" key="6">
    <source>
        <dbReference type="PDB" id="7EU4"/>
    </source>
</evidence>